<proteinExistence type="evidence at transcript level"/>
<sequence length="484" mass="54882">MAARPGAITNADSASGGGEEEGKHVKPFTPEKAKEIIMCLQQPAVFYNMVFDWPAQHWTAKHLSEVLHGKQIRFRMGTKSTDTAPQFETACNYVEATLEEFLSWNSDQSSISGAFRDYDHSKFWAYADYKYFVSLFEDKTDIFQDVIWSDFGFPGRNGQESTLWIGSLGAHTPCHLDTYGCNLVFQVQGRKRWHLFPPEDTPFLYPTRIPYEESSVFSKINVVNPDLKRFPQFRKARRHMVTLSPGQVLFVPRHWWHYVESIDPVTVSINSWIELEEDHQTRVEEAITRMLVCALKTAENPHNTRAWLNPTELEETSHEINCHYLNGAISAFFNHYGTSEVVETQALRTNREYTIKEELNMHSHVGVEQAGGHNLSSETVKQEAASPFGLDLVPVTPSSEEPSSERGGIFENDGEDFVSKNGKSFGKRQRMMSESENAVVEQIASDRTVAVSQTFVSTDDLLDCLVNPQVTRIVAQLLIQGRST</sequence>
<evidence type="ECO:0000250" key="1"/>
<evidence type="ECO:0000255" key="2">
    <source>
        <dbReference type="PROSITE-ProRule" id="PRU00538"/>
    </source>
</evidence>
<evidence type="ECO:0000256" key="3">
    <source>
        <dbReference type="SAM" id="MobiDB-lite"/>
    </source>
</evidence>
<evidence type="ECO:0000303" key="4">
    <source ref="2"/>
</evidence>
<accession>Q58CU3</accession>
<accession>Q0VCH5</accession>
<keyword id="KW-0025">Alternative splicing</keyword>
<keyword id="KW-0963">Cytoplasm</keyword>
<keyword id="KW-1185">Reference proteome</keyword>
<keyword id="KW-0346">Stress response</keyword>
<comment type="function">
    <text evidence="1">May play a role in cellular stress response.</text>
</comment>
<comment type="subunit">
    <text evidence="1">Interacts with CRYAB and HSPB1.</text>
</comment>
<comment type="subcellular location">
    <subcellularLocation>
        <location evidence="1">Cytoplasm</location>
    </subcellularLocation>
</comment>
<comment type="alternative products">
    <event type="alternative splicing"/>
    <isoform>
        <id>Q58CU3-1</id>
        <name>1</name>
        <sequence type="displayed"/>
    </isoform>
    <isoform>
        <id>Q58CU3-2</id>
        <name>2</name>
        <sequence type="described" ref="VSP_024440 VSP_024441"/>
    </isoform>
</comment>
<reference key="1">
    <citation type="journal article" date="2005" name="BMC Genomics">
        <title>Characterization of 954 bovine full-CDS cDNA sequences.</title>
        <authorList>
            <person name="Harhay G.P."/>
            <person name="Sonstegard T.S."/>
            <person name="Keele J.W."/>
            <person name="Heaton M.P."/>
            <person name="Clawson M.L."/>
            <person name="Snelling W.M."/>
            <person name="Wiedmann R.T."/>
            <person name="Van Tassell C.P."/>
            <person name="Smith T.P.L."/>
        </authorList>
    </citation>
    <scope>NUCLEOTIDE SEQUENCE [LARGE SCALE MRNA] (ISOFORM 1)</scope>
</reference>
<reference key="2">
    <citation type="submission" date="2006-08" db="EMBL/GenBank/DDBJ databases">
        <authorList>
            <consortium name="NIH - Mammalian Gene Collection (MGC) project"/>
        </authorList>
    </citation>
    <scope>NUCLEOTIDE SEQUENCE [LARGE SCALE MRNA] (ISOFORM 2)</scope>
    <source>
        <strain>Hereford</strain>
        <tissue>Fetal pons</tissue>
    </source>
</reference>
<protein>
    <recommendedName>
        <fullName>HSPB1-associated protein 1</fullName>
    </recommendedName>
    <alternativeName>
        <fullName>27 kDa heat shock protein-associated protein 1</fullName>
    </alternativeName>
</protein>
<gene>
    <name type="primary">HSPBAP1</name>
</gene>
<feature type="chain" id="PRO_0000284112" description="HSPB1-associated protein 1">
    <location>
        <begin position="1"/>
        <end position="484"/>
    </location>
</feature>
<feature type="domain" description="JmjC" evidence="2">
    <location>
        <begin position="124"/>
        <end position="288"/>
    </location>
</feature>
<feature type="region of interest" description="Disordered" evidence="3">
    <location>
        <begin position="1"/>
        <end position="26"/>
    </location>
</feature>
<feature type="region of interest" description="Interaction with HSPB1" evidence="1">
    <location>
        <begin position="88"/>
        <end position="208"/>
    </location>
</feature>
<feature type="region of interest" description="Disordered" evidence="3">
    <location>
        <begin position="396"/>
        <end position="429"/>
    </location>
</feature>
<feature type="splice variant" id="VSP_024440" description="In isoform 2." evidence="4">
    <original>APQFETACNYVEA</original>
    <variation>GRTTRNRHRNVSS</variation>
    <location>
        <begin position="84"/>
        <end position="96"/>
    </location>
</feature>
<feature type="splice variant" id="VSP_024441" description="In isoform 2." evidence="4">
    <location>
        <begin position="97"/>
        <end position="484"/>
    </location>
</feature>
<organism>
    <name type="scientific">Bos taurus</name>
    <name type="common">Bovine</name>
    <dbReference type="NCBI Taxonomy" id="9913"/>
    <lineage>
        <taxon>Eukaryota</taxon>
        <taxon>Metazoa</taxon>
        <taxon>Chordata</taxon>
        <taxon>Craniata</taxon>
        <taxon>Vertebrata</taxon>
        <taxon>Euteleostomi</taxon>
        <taxon>Mammalia</taxon>
        <taxon>Eutheria</taxon>
        <taxon>Laurasiatheria</taxon>
        <taxon>Artiodactyla</taxon>
        <taxon>Ruminantia</taxon>
        <taxon>Pecora</taxon>
        <taxon>Bovidae</taxon>
        <taxon>Bovinae</taxon>
        <taxon>Bos</taxon>
    </lineage>
</organism>
<dbReference type="EMBL" id="BT021854">
    <property type="protein sequence ID" value="AAX46701.1"/>
    <property type="molecule type" value="mRNA"/>
</dbReference>
<dbReference type="EMBL" id="BC120165">
    <property type="protein sequence ID" value="AAI20166.1"/>
    <property type="molecule type" value="mRNA"/>
</dbReference>
<dbReference type="RefSeq" id="NP_001014911.1">
    <molecule id="Q58CU3-1"/>
    <property type="nucleotide sequence ID" value="NM_001014911.1"/>
</dbReference>
<dbReference type="SMR" id="Q58CU3"/>
<dbReference type="FunCoup" id="Q58CU3">
    <property type="interactions" value="3087"/>
</dbReference>
<dbReference type="STRING" id="9913.ENSBTAP00000057387"/>
<dbReference type="PaxDb" id="9913-ENSBTAP00000006679"/>
<dbReference type="Ensembl" id="ENSBTAT00000006679.4">
    <molecule id="Q58CU3-1"/>
    <property type="protein sequence ID" value="ENSBTAP00000006679.3"/>
    <property type="gene ID" value="ENSBTAG00000005066.7"/>
</dbReference>
<dbReference type="GeneID" id="513211"/>
<dbReference type="KEGG" id="bta:513211"/>
<dbReference type="CTD" id="79663"/>
<dbReference type="VEuPathDB" id="HostDB:ENSBTAG00000005066"/>
<dbReference type="eggNOG" id="KOG2132">
    <property type="taxonomic scope" value="Eukaryota"/>
</dbReference>
<dbReference type="GeneTree" id="ENSGT00940000159893"/>
<dbReference type="HOGENOM" id="CLU_016785_5_1_1"/>
<dbReference type="InParanoid" id="Q58CU3"/>
<dbReference type="OrthoDB" id="47172at2759"/>
<dbReference type="TreeFam" id="TF315056"/>
<dbReference type="Proteomes" id="UP000009136">
    <property type="component" value="Chromosome 1"/>
</dbReference>
<dbReference type="Bgee" id="ENSBTAG00000005066">
    <property type="expression patterns" value="Expressed in oocyte and 104 other cell types or tissues"/>
</dbReference>
<dbReference type="GO" id="GO:0005737">
    <property type="term" value="C:cytoplasm"/>
    <property type="evidence" value="ECO:0007669"/>
    <property type="project" value="UniProtKB-SubCell"/>
</dbReference>
<dbReference type="GO" id="GO:0016706">
    <property type="term" value="F:2-oxoglutarate-dependent dioxygenase activity"/>
    <property type="evidence" value="ECO:0000318"/>
    <property type="project" value="GO_Central"/>
</dbReference>
<dbReference type="FunFam" id="2.60.120.650:FF:000018">
    <property type="entry name" value="HSPB1-associated protein 1 homolog"/>
    <property type="match status" value="1"/>
</dbReference>
<dbReference type="FunFam" id="2.60.120.10:FF:000343">
    <property type="entry name" value="HSPB1-associated protein 1 isoform X3"/>
    <property type="match status" value="1"/>
</dbReference>
<dbReference type="Gene3D" id="2.60.120.10">
    <property type="entry name" value="Jelly Rolls"/>
    <property type="match status" value="1"/>
</dbReference>
<dbReference type="InterPro" id="IPR041667">
    <property type="entry name" value="Cupin_8"/>
</dbReference>
<dbReference type="InterPro" id="IPR013296">
    <property type="entry name" value="HSPB1-associated_protein_1"/>
</dbReference>
<dbReference type="InterPro" id="IPR003347">
    <property type="entry name" value="JmjC_dom"/>
</dbReference>
<dbReference type="InterPro" id="IPR014710">
    <property type="entry name" value="RmlC-like_jellyroll"/>
</dbReference>
<dbReference type="PANTHER" id="PTHR12461:SF43">
    <property type="entry name" value="HSPB1-ASSOCIATED PROTEIN 1"/>
    <property type="match status" value="1"/>
</dbReference>
<dbReference type="PANTHER" id="PTHR12461">
    <property type="entry name" value="HYPOXIA-INDUCIBLE FACTOR 1 ALPHA INHIBITOR-RELATED"/>
    <property type="match status" value="1"/>
</dbReference>
<dbReference type="Pfam" id="PF13621">
    <property type="entry name" value="Cupin_8"/>
    <property type="match status" value="1"/>
</dbReference>
<dbReference type="PRINTS" id="PR01886">
    <property type="entry name" value="PASS1"/>
</dbReference>
<dbReference type="SMART" id="SM00558">
    <property type="entry name" value="JmjC"/>
    <property type="match status" value="1"/>
</dbReference>
<dbReference type="SUPFAM" id="SSF51197">
    <property type="entry name" value="Clavaminate synthase-like"/>
    <property type="match status" value="1"/>
</dbReference>
<dbReference type="PROSITE" id="PS51184">
    <property type="entry name" value="JMJC"/>
    <property type="match status" value="1"/>
</dbReference>
<name>HBAP1_BOVIN</name>